<comment type="function">
    <text evidence="5 6">Cleaves the beta-1,4-linkages between beta-D-galactose and alpha-L-3,6-anhydro-galactose residues in agarose. Cleaves agarose in a random manner with retention of the anomeric-bond configuration, producing beta-anomers that give rise progressively to alpha-anomers when mutarotation takes place. Also tolerant to hybrid substrates containing C6-sulfate groups at the -4, +1, and +3 positions.</text>
</comment>
<comment type="catalytic activity">
    <reaction evidence="5 6">
        <text>Hydrolysis of (1-&gt;4)-beta-D-galactosidic linkages in agarose, giving the tetramer as the predominant product.</text>
        <dbReference type="EC" id="3.2.1.81"/>
    </reaction>
</comment>
<comment type="biophysicochemical properties">
    <kinetics>
        <KM evidence="5">1 mM for agarose</KM>
        <text>kcat is 100 sec(-1).</text>
    </kinetics>
</comment>
<comment type="subunit">
    <text evidence="5 6">Homodimer.</text>
</comment>
<comment type="subcellular location">
    <subcellularLocation>
        <location evidence="8">Cell outer membrane</location>
        <topology evidence="8">Lipid-anchor</topology>
    </subcellularLocation>
</comment>
<comment type="induction">
    <text evidence="6">When cells are grown with the low sulfated agar.</text>
</comment>
<comment type="similarity">
    <text evidence="7">Belongs to the glycosyl hydrolase 16 family.</text>
</comment>
<feature type="signal peptide" evidence="2">
    <location>
        <begin position="1"/>
        <end position="17"/>
    </location>
</feature>
<feature type="chain" id="PRO_5000055270" description="Beta-agarase B">
    <location>
        <begin position="18"/>
        <end position="353"/>
    </location>
</feature>
<feature type="domain" description="GH16" evidence="3">
    <location>
        <begin position="58"/>
        <end position="353"/>
    </location>
</feature>
<feature type="region of interest" description="Disordered" evidence="4">
    <location>
        <begin position="30"/>
        <end position="58"/>
    </location>
</feature>
<feature type="compositionally biased region" description="Acidic residues" evidence="4">
    <location>
        <begin position="32"/>
        <end position="58"/>
    </location>
</feature>
<feature type="active site" description="Nucleophile" evidence="1">
    <location>
        <position position="184"/>
    </location>
</feature>
<feature type="active site" description="Proton donor" evidence="1">
    <location>
        <position position="189"/>
    </location>
</feature>
<feature type="binding site" evidence="6">
    <location>
        <begin position="105"/>
        <end position="107"/>
    </location>
    <ligand>
        <name>substrate</name>
    </ligand>
</feature>
<feature type="binding site" evidence="6">
    <location>
        <position position="181"/>
    </location>
    <ligand>
        <name>substrate</name>
    </ligand>
</feature>
<feature type="binding site" evidence="6">
    <location>
        <position position="215"/>
    </location>
    <ligand>
        <name>substrate</name>
    </ligand>
</feature>
<feature type="binding site" evidence="6">
    <location>
        <position position="219"/>
    </location>
    <ligand>
        <name>substrate</name>
    </ligand>
</feature>
<feature type="binding site" evidence="6">
    <location>
        <position position="224"/>
    </location>
    <ligand>
        <name>substrate</name>
    </ligand>
</feature>
<feature type="binding site" evidence="6">
    <location>
        <position position="226"/>
    </location>
    <ligand>
        <name>substrate</name>
    </ligand>
</feature>
<feature type="binding site" evidence="6">
    <location>
        <position position="308"/>
    </location>
    <ligand>
        <name>substrate</name>
    </ligand>
</feature>
<feature type="lipid moiety-binding region" description="N-palmitoyl cysteine" evidence="2">
    <location>
        <position position="18"/>
    </location>
</feature>
<feature type="lipid moiety-binding region" description="S-diacylglycerol cysteine" evidence="2">
    <location>
        <position position="18"/>
    </location>
</feature>
<feature type="mutagenesis site" description="Abolishes beta-agarase activity.">
    <original>E</original>
    <variation>D</variation>
    <location>
        <position position="189"/>
    </location>
</feature>
<feature type="helix" evidence="9">
    <location>
        <begin position="60"/>
        <end position="62"/>
    </location>
</feature>
<feature type="strand" evidence="9">
    <location>
        <begin position="73"/>
        <end position="77"/>
    </location>
</feature>
<feature type="helix" evidence="9">
    <location>
        <begin position="95"/>
        <end position="100"/>
    </location>
</feature>
<feature type="strand" evidence="9">
    <location>
        <begin position="101"/>
        <end position="104"/>
    </location>
</feature>
<feature type="strand" evidence="9">
    <location>
        <begin position="106"/>
        <end position="108"/>
    </location>
</feature>
<feature type="strand" evidence="9">
    <location>
        <begin position="115"/>
        <end position="117"/>
    </location>
</feature>
<feature type="helix" evidence="9">
    <location>
        <begin position="119"/>
        <end position="121"/>
    </location>
</feature>
<feature type="strand" evidence="9">
    <location>
        <begin position="122"/>
        <end position="125"/>
    </location>
</feature>
<feature type="strand" evidence="9">
    <location>
        <begin position="128"/>
        <end position="132"/>
    </location>
</feature>
<feature type="strand" evidence="9">
    <location>
        <begin position="142"/>
        <end position="144"/>
    </location>
</feature>
<feature type="strand" evidence="9">
    <location>
        <begin position="146"/>
        <end position="151"/>
    </location>
</feature>
<feature type="strand" evidence="9">
    <location>
        <begin position="155"/>
        <end position="164"/>
    </location>
</feature>
<feature type="strand" evidence="9">
    <location>
        <begin position="167"/>
        <end position="178"/>
    </location>
</feature>
<feature type="strand" evidence="9">
    <location>
        <begin position="181"/>
        <end position="191"/>
    </location>
</feature>
<feature type="strand" evidence="9">
    <location>
        <begin position="194"/>
        <end position="196"/>
    </location>
</feature>
<feature type="turn" evidence="9">
    <location>
        <begin position="197"/>
        <end position="200"/>
    </location>
</feature>
<feature type="helix" evidence="9">
    <location>
        <begin position="204"/>
        <end position="207"/>
    </location>
</feature>
<feature type="strand" evidence="9">
    <location>
        <begin position="214"/>
        <end position="218"/>
    </location>
</feature>
<feature type="turn" evidence="9">
    <location>
        <begin position="219"/>
        <end position="222"/>
    </location>
</feature>
<feature type="strand" evidence="9">
    <location>
        <begin position="223"/>
        <end position="225"/>
    </location>
</feature>
<feature type="helix" evidence="9">
    <location>
        <begin position="230"/>
        <end position="232"/>
    </location>
</feature>
<feature type="helix" evidence="9">
    <location>
        <begin position="240"/>
        <end position="242"/>
    </location>
</feature>
<feature type="strand" evidence="9">
    <location>
        <begin position="245"/>
        <end position="253"/>
    </location>
</feature>
<feature type="strand" evidence="9">
    <location>
        <begin position="256"/>
        <end position="261"/>
    </location>
</feature>
<feature type="strand" evidence="9">
    <location>
        <begin position="264"/>
        <end position="271"/>
    </location>
</feature>
<feature type="helix" evidence="9">
    <location>
        <begin position="272"/>
        <end position="275"/>
    </location>
</feature>
<feature type="strand" evidence="9">
    <location>
        <begin position="282"/>
        <end position="285"/>
    </location>
</feature>
<feature type="strand" evidence="9">
    <location>
        <begin position="301"/>
        <end position="308"/>
    </location>
</feature>
<feature type="helix" evidence="9">
    <location>
        <begin position="311"/>
        <end position="314"/>
    </location>
</feature>
<feature type="helix" evidence="9">
    <location>
        <begin position="321"/>
        <end position="323"/>
    </location>
</feature>
<feature type="helix" evidence="9">
    <location>
        <begin position="329"/>
        <end position="332"/>
    </location>
</feature>
<feature type="helix" evidence="9">
    <location>
        <begin position="336"/>
        <end position="338"/>
    </location>
</feature>
<feature type="strand" evidence="9">
    <location>
        <begin position="339"/>
        <end position="352"/>
    </location>
</feature>
<name>AGAB_ZOBGA</name>
<proteinExistence type="evidence at protein level"/>
<keyword id="KW-0002">3D-structure</keyword>
<keyword id="KW-0998">Cell outer membrane</keyword>
<keyword id="KW-0326">Glycosidase</keyword>
<keyword id="KW-0378">Hydrolase</keyword>
<keyword id="KW-0449">Lipoprotein</keyword>
<keyword id="KW-0472">Membrane</keyword>
<keyword id="KW-0564">Palmitate</keyword>
<keyword id="KW-1185">Reference proteome</keyword>
<keyword id="KW-0732">Signal</keyword>
<protein>
    <recommendedName>
        <fullName>Beta-agarase B</fullName>
        <ecNumber>3.2.1.81</ecNumber>
    </recommendedName>
</protein>
<reference key="1">
    <citation type="journal article" date="2005" name="Biochem. J.">
        <title>The endo-beta-agarases AgaA and AgaB from the marine bacterium Zobellia galactanivorans: two paralogue enzymes with different molecular organizations and catalytic behaviours.</title>
        <authorList>
            <person name="Jam M."/>
            <person name="Flament D."/>
            <person name="Allouch J."/>
            <person name="Potin P."/>
            <person name="Thion L."/>
            <person name="Kloareg B."/>
            <person name="Czjzek M."/>
            <person name="Helbert W."/>
            <person name="Michel G."/>
            <person name="Barbeyron T."/>
        </authorList>
    </citation>
    <scope>NUCLEOTIDE SEQUENCE [GENOMIC DNA]</scope>
    <scope>FUNCTION</scope>
    <scope>CATALYTIC ACTIVITY</scope>
    <scope>BIOPHYSICOCHEMICAL PROPERTIES</scope>
    <scope>SUBUNIT</scope>
    <scope>SUBCELLULAR LOCATION</scope>
    <source>
        <strain>DSM 12802 / CCUG 47099 / CIP 106680 / KCTC 12921 / NCIMB 13871 / Dsij</strain>
    </source>
</reference>
<reference key="2">
    <citation type="submission" date="2009-07" db="EMBL/GenBank/DDBJ databases">
        <title>Complete genome sequence of Zobellia galactanivorans Dsij.</title>
        <authorList>
            <consortium name="Genoscope - CEA"/>
        </authorList>
    </citation>
    <scope>NUCLEOTIDE SEQUENCE [LARGE SCALE GENOMIC DNA]</scope>
    <source>
        <strain>DSM 12802 / CCUG 47099 / CIP 106680 / KCTC 12921 / NCIMB 13871 / Dsij</strain>
    </source>
</reference>
<reference key="3">
    <citation type="journal article" date="2003" name="J. Biol. Chem.">
        <title>The three-dimensional structures of two beta-agarases.</title>
        <authorList>
            <person name="Allouch J."/>
            <person name="Jam M."/>
            <person name="Helbert W."/>
            <person name="Barbeyron T."/>
            <person name="Kloareg B."/>
            <person name="Henrissat B."/>
            <person name="Czjzek M."/>
        </authorList>
    </citation>
    <scope>X-RAY CRYSTALLOGRAPHY (2.30 ANGSTROMS) OF 19-353</scope>
</reference>
<reference key="4">
    <citation type="journal article" date="2012" name="J. Biol. Chem.">
        <title>Biochemical and structural characterization of the complex agarolytic enzyme system from the marine bacterium Zobellia galactanivorans.</title>
        <authorList>
            <person name="Hehemann J.H."/>
            <person name="Correc G."/>
            <person name="Thomas F."/>
            <person name="Bernard T."/>
            <person name="Barbeyron T."/>
            <person name="Jam M."/>
            <person name="Helbert W."/>
            <person name="Michel G."/>
            <person name="Czjzek M."/>
        </authorList>
    </citation>
    <scope>X-RAY CRYSTALLOGRAPHY (1.90 ANGSTROMS) OF 53-353 OF MUTANT ASP-189 IN COMPLEX WITH NEOAGAROOCTAOSE</scope>
    <scope>FUNCTION</scope>
    <scope>CATALYTIC ACTIVITY</scope>
    <scope>INDUCTION</scope>
</reference>
<sequence length="353" mass="40675">MYLIYLRLVFCCALLLGCGDNSKFDSATDLPVEQEQEQETEQEGEPEESSEQDLVEEVDWKDIPVPADAGPNMKWEFQEISDNFEYEAPADNKGSEFLEKWDDFYHNAWAGPGLTEWKRDRSYVADGELKMWATRKPGSDKINMGCITSKTRVVYPVYIEARAKVMNSTLASDVWLLSADDTQEIDILEAYGADYSESAGKDHSYFSKKVHISHHVFIRDPFQDYQPKDAGSWFEDGTVWNKEFHRFGVYWRDPWHLEYYIDGVLVRTVSGKDIIDPKHFTNTTDPGNTEIDTRTGLNKEMDIIINTEDQTWRSSPASGLQSNTYTPTDNELSNIENNTFGVDWIRIYKPVEK</sequence>
<organism>
    <name type="scientific">Zobellia galactanivorans (strain DSM 12802 / CCUG 47099 / CIP 106680 / NCIMB 13871 / Dsij)</name>
    <dbReference type="NCBI Taxonomy" id="63186"/>
    <lineage>
        <taxon>Bacteria</taxon>
        <taxon>Pseudomonadati</taxon>
        <taxon>Bacteroidota</taxon>
        <taxon>Flavobacteriia</taxon>
        <taxon>Flavobacteriales</taxon>
        <taxon>Flavobacteriaceae</taxon>
        <taxon>Zobellia</taxon>
    </lineage>
</organism>
<evidence type="ECO:0000250" key="1">
    <source>
        <dbReference type="UniProtKB" id="G0L322"/>
    </source>
</evidence>
<evidence type="ECO:0000255" key="2">
    <source>
        <dbReference type="PROSITE-ProRule" id="PRU00303"/>
    </source>
</evidence>
<evidence type="ECO:0000255" key="3">
    <source>
        <dbReference type="PROSITE-ProRule" id="PRU01098"/>
    </source>
</evidence>
<evidence type="ECO:0000256" key="4">
    <source>
        <dbReference type="SAM" id="MobiDB-lite"/>
    </source>
</evidence>
<evidence type="ECO:0000269" key="5">
    <source>
    </source>
</evidence>
<evidence type="ECO:0000269" key="6">
    <source>
    </source>
</evidence>
<evidence type="ECO:0000305" key="7"/>
<evidence type="ECO:0000305" key="8">
    <source>
    </source>
</evidence>
<evidence type="ECO:0007829" key="9">
    <source>
        <dbReference type="PDB" id="4ATF"/>
    </source>
</evidence>
<dbReference type="EC" id="3.2.1.81"/>
<dbReference type="EMBL" id="AF098955">
    <property type="protein sequence ID" value="AAF21821.1"/>
    <property type="molecule type" value="Genomic_DNA"/>
</dbReference>
<dbReference type="EMBL" id="FP476056">
    <property type="protein sequence ID" value="CAZ97711.1"/>
    <property type="molecule type" value="Genomic_DNA"/>
</dbReference>
<dbReference type="RefSeq" id="WP_013994901.1">
    <property type="nucleotide sequence ID" value="NC_015844.1"/>
</dbReference>
<dbReference type="PDB" id="1O4Z">
    <property type="method" value="X-ray"/>
    <property type="resolution" value="2.30 A"/>
    <property type="chains" value="A/B/C/D=19-353"/>
</dbReference>
<dbReference type="PDB" id="4ATF">
    <property type="method" value="X-ray"/>
    <property type="resolution" value="1.90 A"/>
    <property type="chains" value="A/B/C/D=53-353"/>
</dbReference>
<dbReference type="PDBsum" id="1O4Z"/>
<dbReference type="PDBsum" id="4ATF"/>
<dbReference type="SMR" id="Q9RGX8"/>
<dbReference type="STRING" id="63186.ZOBELLIA_3573"/>
<dbReference type="CAZy" id="GH16">
    <property type="family name" value="Glycoside Hydrolase Family 16"/>
</dbReference>
<dbReference type="KEGG" id="zga:ZOBELLIA_3573"/>
<dbReference type="PATRIC" id="fig|63186.3.peg.3487"/>
<dbReference type="HOGENOM" id="CLU_037753_0_0_10"/>
<dbReference type="OrthoDB" id="9809583at2"/>
<dbReference type="BioCyc" id="MetaCyc:MONOMER-16650"/>
<dbReference type="BRENDA" id="3.2.1.81">
    <property type="organism ID" value="7557"/>
</dbReference>
<dbReference type="SABIO-RK" id="Q9RGX8"/>
<dbReference type="EvolutionaryTrace" id="Q9RGX8"/>
<dbReference type="Proteomes" id="UP000008898">
    <property type="component" value="Chromosome"/>
</dbReference>
<dbReference type="GO" id="GO:0009279">
    <property type="term" value="C:cell outer membrane"/>
    <property type="evidence" value="ECO:0000304"/>
    <property type="project" value="UniProtKB"/>
</dbReference>
<dbReference type="GO" id="GO:0033916">
    <property type="term" value="F:beta-agarase activity"/>
    <property type="evidence" value="ECO:0000314"/>
    <property type="project" value="UniProtKB"/>
</dbReference>
<dbReference type="GO" id="GO:0042803">
    <property type="term" value="F:protein homodimerization activity"/>
    <property type="evidence" value="ECO:0000314"/>
    <property type="project" value="UniProtKB"/>
</dbReference>
<dbReference type="GO" id="GO:0005975">
    <property type="term" value="P:carbohydrate metabolic process"/>
    <property type="evidence" value="ECO:0000314"/>
    <property type="project" value="UniProtKB"/>
</dbReference>
<dbReference type="CDD" id="cd02178">
    <property type="entry name" value="GH16_beta_agarase"/>
    <property type="match status" value="1"/>
</dbReference>
<dbReference type="Gene3D" id="2.60.120.200">
    <property type="match status" value="1"/>
</dbReference>
<dbReference type="InterPro" id="IPR016287">
    <property type="entry name" value="Beta_agarase"/>
</dbReference>
<dbReference type="InterPro" id="IPR013320">
    <property type="entry name" value="ConA-like_dom_sf"/>
</dbReference>
<dbReference type="InterPro" id="IPR000757">
    <property type="entry name" value="GH16"/>
</dbReference>
<dbReference type="Pfam" id="PF00722">
    <property type="entry name" value="Glyco_hydro_16"/>
    <property type="match status" value="1"/>
</dbReference>
<dbReference type="PIRSF" id="PIRSF001097">
    <property type="entry name" value="Agarase"/>
    <property type="match status" value="1"/>
</dbReference>
<dbReference type="SUPFAM" id="SSF49899">
    <property type="entry name" value="Concanavalin A-like lectins/glucanases"/>
    <property type="match status" value="1"/>
</dbReference>
<dbReference type="PROSITE" id="PS51762">
    <property type="entry name" value="GH16_2"/>
    <property type="match status" value="1"/>
</dbReference>
<dbReference type="PROSITE" id="PS51257">
    <property type="entry name" value="PROKAR_LIPOPROTEIN"/>
    <property type="match status" value="1"/>
</dbReference>
<gene>
    <name type="primary">agaB</name>
    <name type="ordered locus">zobellia_3573</name>
</gene>
<accession>Q9RGX8</accession>